<sequence>MVASARGLRTLHSAHSSISALPASTVPRLQLAVSRCYATTTSPDCPITNSSNSSNSTPTLTPKQRITAFKDKLNAGPSFSDFVSGGGASNDSVPLDPTEAYSLKTALVGPPGKKKQIIRLPSWLKTPIPDSPNFRRIKSDLRGLNLHTVCEEARCPNISDCWGGSSKSAATATIMLMGDTCTRGCRFCSVKTSRTPPPLDPHEPENTAEALSRWGLGYVVMTSVDRDDLADGGARHVAETVRKVKQKAPNILLECLTGDYAGDLEMVALVATSGLDVFAHNVETVEALTPFVRDRRATFQQSLRVLKAAKEAKPELITKTSIMLGLGETEAQLWETLKALRAVDVDVVTFGQYMRPTKRHMAVHEYVRPDVFDSWKERALEMGFLYCASGPLVRSSYKAGEAFIENVLKKRRGEGADGSGGSSTRREDVERLVAGGVVR</sequence>
<dbReference type="EC" id="2.8.1.8" evidence="1"/>
<dbReference type="EMBL" id="KN294007">
    <property type="protein sequence ID" value="EEH34888.1"/>
    <property type="molecule type" value="Genomic_DNA"/>
</dbReference>
<dbReference type="RefSeq" id="XP_002792147.1">
    <property type="nucleotide sequence ID" value="XM_002792101.2"/>
</dbReference>
<dbReference type="SMR" id="C1H594"/>
<dbReference type="STRING" id="502779.C1H594"/>
<dbReference type="GeneID" id="9095385"/>
<dbReference type="KEGG" id="pbl:PAAG_05935"/>
<dbReference type="VEuPathDB" id="FungiDB:PAAG_05935"/>
<dbReference type="eggNOG" id="KOG2672">
    <property type="taxonomic scope" value="Eukaryota"/>
</dbReference>
<dbReference type="HOGENOM" id="CLU_033144_0_1_1"/>
<dbReference type="OMA" id="PYCDIDF"/>
<dbReference type="OrthoDB" id="3231at2759"/>
<dbReference type="UniPathway" id="UPA00538">
    <property type="reaction ID" value="UER00593"/>
</dbReference>
<dbReference type="Proteomes" id="UP000002059">
    <property type="component" value="Partially assembled WGS sequence"/>
</dbReference>
<dbReference type="GO" id="GO:0005739">
    <property type="term" value="C:mitochondrion"/>
    <property type="evidence" value="ECO:0007669"/>
    <property type="project" value="UniProtKB-SubCell"/>
</dbReference>
<dbReference type="GO" id="GO:0051539">
    <property type="term" value="F:4 iron, 4 sulfur cluster binding"/>
    <property type="evidence" value="ECO:0007669"/>
    <property type="project" value="UniProtKB-UniRule"/>
</dbReference>
<dbReference type="GO" id="GO:0016992">
    <property type="term" value="F:lipoate synthase activity"/>
    <property type="evidence" value="ECO:0007669"/>
    <property type="project" value="UniProtKB-UniRule"/>
</dbReference>
<dbReference type="GO" id="GO:0046872">
    <property type="term" value="F:metal ion binding"/>
    <property type="evidence" value="ECO:0007669"/>
    <property type="project" value="UniProtKB-KW"/>
</dbReference>
<dbReference type="CDD" id="cd01335">
    <property type="entry name" value="Radical_SAM"/>
    <property type="match status" value="1"/>
</dbReference>
<dbReference type="FunFam" id="3.20.20.70:FF:000036">
    <property type="entry name" value="Lipoyl synthase, mitochondrial"/>
    <property type="match status" value="1"/>
</dbReference>
<dbReference type="Gene3D" id="3.20.20.70">
    <property type="entry name" value="Aldolase class I"/>
    <property type="match status" value="1"/>
</dbReference>
<dbReference type="HAMAP" id="MF_00206">
    <property type="entry name" value="Lipoyl_synth"/>
    <property type="match status" value="1"/>
</dbReference>
<dbReference type="InterPro" id="IPR013785">
    <property type="entry name" value="Aldolase_TIM"/>
</dbReference>
<dbReference type="InterPro" id="IPR006638">
    <property type="entry name" value="Elp3/MiaA/NifB-like_rSAM"/>
</dbReference>
<dbReference type="InterPro" id="IPR031691">
    <property type="entry name" value="LIAS_N"/>
</dbReference>
<dbReference type="InterPro" id="IPR003698">
    <property type="entry name" value="Lipoyl_synth"/>
</dbReference>
<dbReference type="InterPro" id="IPR007197">
    <property type="entry name" value="rSAM"/>
</dbReference>
<dbReference type="NCBIfam" id="TIGR00510">
    <property type="entry name" value="lipA"/>
    <property type="match status" value="1"/>
</dbReference>
<dbReference type="NCBIfam" id="NF004019">
    <property type="entry name" value="PRK05481.1"/>
    <property type="match status" value="1"/>
</dbReference>
<dbReference type="NCBIfam" id="NF009544">
    <property type="entry name" value="PRK12928.1"/>
    <property type="match status" value="1"/>
</dbReference>
<dbReference type="PANTHER" id="PTHR10949">
    <property type="entry name" value="LIPOYL SYNTHASE"/>
    <property type="match status" value="1"/>
</dbReference>
<dbReference type="PANTHER" id="PTHR10949:SF0">
    <property type="entry name" value="LIPOYL SYNTHASE, MITOCHONDRIAL"/>
    <property type="match status" value="1"/>
</dbReference>
<dbReference type="Pfam" id="PF16881">
    <property type="entry name" value="LIAS_N"/>
    <property type="match status" value="1"/>
</dbReference>
<dbReference type="Pfam" id="PF04055">
    <property type="entry name" value="Radical_SAM"/>
    <property type="match status" value="1"/>
</dbReference>
<dbReference type="SFLD" id="SFLDF00271">
    <property type="entry name" value="lipoyl_synthase"/>
    <property type="match status" value="1"/>
</dbReference>
<dbReference type="SFLD" id="SFLDG01058">
    <property type="entry name" value="lipoyl_synthase_like"/>
    <property type="match status" value="1"/>
</dbReference>
<dbReference type="SMART" id="SM00729">
    <property type="entry name" value="Elp3"/>
    <property type="match status" value="1"/>
</dbReference>
<dbReference type="SUPFAM" id="SSF102114">
    <property type="entry name" value="Radical SAM enzymes"/>
    <property type="match status" value="1"/>
</dbReference>
<dbReference type="PROSITE" id="PS51918">
    <property type="entry name" value="RADICAL_SAM"/>
    <property type="match status" value="1"/>
</dbReference>
<organism>
    <name type="scientific">Paracoccidioides lutzii (strain ATCC MYA-826 / Pb01)</name>
    <name type="common">Paracoccidioides brasiliensis</name>
    <dbReference type="NCBI Taxonomy" id="502779"/>
    <lineage>
        <taxon>Eukaryota</taxon>
        <taxon>Fungi</taxon>
        <taxon>Dikarya</taxon>
        <taxon>Ascomycota</taxon>
        <taxon>Pezizomycotina</taxon>
        <taxon>Eurotiomycetes</taxon>
        <taxon>Eurotiomycetidae</taxon>
        <taxon>Onygenales</taxon>
        <taxon>Ajellomycetaceae</taxon>
        <taxon>Paracoccidioides</taxon>
    </lineage>
</organism>
<accession>C1H594</accession>
<comment type="function">
    <text evidence="1">Catalyzes the radical-mediated insertion of two sulfur atoms into the C-6 and C-8 positions of the octanoyl moiety bound to the lipoyl domains of lipoate-dependent enzymes, thereby converting the octanoylated domains into lipoylated derivatives.</text>
</comment>
<comment type="catalytic activity">
    <reaction evidence="1">
        <text>[[Fe-S] cluster scaffold protein carrying a second [4Fe-4S](2+) cluster] + N(6)-octanoyl-L-lysyl-[protein] + 2 oxidized [2Fe-2S]-[ferredoxin] + 2 S-adenosyl-L-methionine + 4 H(+) = [[Fe-S] cluster scaffold protein] + N(6)-[(R)-dihydrolipoyl]-L-lysyl-[protein] + 4 Fe(3+) + 2 hydrogen sulfide + 2 5'-deoxyadenosine + 2 L-methionine + 2 reduced [2Fe-2S]-[ferredoxin]</text>
        <dbReference type="Rhea" id="RHEA:16585"/>
        <dbReference type="Rhea" id="RHEA-COMP:9928"/>
        <dbReference type="Rhea" id="RHEA-COMP:10000"/>
        <dbReference type="Rhea" id="RHEA-COMP:10001"/>
        <dbReference type="Rhea" id="RHEA-COMP:10475"/>
        <dbReference type="Rhea" id="RHEA-COMP:14568"/>
        <dbReference type="Rhea" id="RHEA-COMP:14569"/>
        <dbReference type="ChEBI" id="CHEBI:15378"/>
        <dbReference type="ChEBI" id="CHEBI:17319"/>
        <dbReference type="ChEBI" id="CHEBI:29034"/>
        <dbReference type="ChEBI" id="CHEBI:29919"/>
        <dbReference type="ChEBI" id="CHEBI:33722"/>
        <dbReference type="ChEBI" id="CHEBI:33737"/>
        <dbReference type="ChEBI" id="CHEBI:33738"/>
        <dbReference type="ChEBI" id="CHEBI:57844"/>
        <dbReference type="ChEBI" id="CHEBI:59789"/>
        <dbReference type="ChEBI" id="CHEBI:78809"/>
        <dbReference type="ChEBI" id="CHEBI:83100"/>
        <dbReference type="EC" id="2.8.1.8"/>
    </reaction>
</comment>
<comment type="cofactor">
    <cofactor evidence="1">
        <name>[4Fe-4S] cluster</name>
        <dbReference type="ChEBI" id="CHEBI:49883"/>
    </cofactor>
    <text evidence="1">Binds 2 [4Fe-4S] clusters per subunit. One cluster is coordinated with 3 cysteines and an exchangeable S-adenosyl-L-methionine.</text>
</comment>
<comment type="pathway">
    <text evidence="1">Protein modification; protein lipoylation via endogenous pathway; protein N(6)-(lipoyl)lysine from octanoyl-[acyl-carrier-protein]: step 2/2.</text>
</comment>
<comment type="subcellular location">
    <subcellularLocation>
        <location evidence="1">Mitochondrion</location>
    </subcellularLocation>
</comment>
<comment type="similarity">
    <text evidence="1">Belongs to the radical SAM superfamily. Lipoyl synthase family.</text>
</comment>
<gene>
    <name type="ORF">PAAG_05935</name>
</gene>
<keyword id="KW-0004">4Fe-4S</keyword>
<keyword id="KW-0408">Iron</keyword>
<keyword id="KW-0411">Iron-sulfur</keyword>
<keyword id="KW-0479">Metal-binding</keyword>
<keyword id="KW-0496">Mitochondrion</keyword>
<keyword id="KW-1185">Reference proteome</keyword>
<keyword id="KW-0949">S-adenosyl-L-methionine</keyword>
<keyword id="KW-0808">Transferase</keyword>
<keyword id="KW-0809">Transit peptide</keyword>
<protein>
    <recommendedName>
        <fullName evidence="1">Lipoyl synthase, mitochondrial</fullName>
        <ecNumber evidence="1">2.8.1.8</ecNumber>
    </recommendedName>
    <alternativeName>
        <fullName evidence="1">Lipoate synthase</fullName>
        <shortName evidence="1">LS</shortName>
        <shortName evidence="1">Lip-syn</shortName>
    </alternativeName>
    <alternativeName>
        <fullName evidence="1">Lipoic acid synthase</fullName>
    </alternativeName>
</protein>
<name>LIPA_PARBA</name>
<evidence type="ECO:0000255" key="1">
    <source>
        <dbReference type="HAMAP-Rule" id="MF_03123"/>
    </source>
</evidence>
<evidence type="ECO:0000255" key="2">
    <source>
        <dbReference type="PROSITE-ProRule" id="PRU01266"/>
    </source>
</evidence>
<feature type="transit peptide" description="Mitochondrion" evidence="1">
    <location>
        <begin position="1"/>
        <end position="37"/>
    </location>
</feature>
<feature type="chain" id="PRO_0000398276" description="Lipoyl synthase, mitochondrial">
    <location>
        <begin position="38"/>
        <end position="439"/>
    </location>
</feature>
<feature type="domain" description="Radical SAM core" evidence="2">
    <location>
        <begin position="164"/>
        <end position="385"/>
    </location>
</feature>
<feature type="binding site" evidence="1">
    <location>
        <position position="150"/>
    </location>
    <ligand>
        <name>[4Fe-4S] cluster</name>
        <dbReference type="ChEBI" id="CHEBI:49883"/>
        <label>1</label>
    </ligand>
</feature>
<feature type="binding site" evidence="1">
    <location>
        <position position="155"/>
    </location>
    <ligand>
        <name>[4Fe-4S] cluster</name>
        <dbReference type="ChEBI" id="CHEBI:49883"/>
        <label>1</label>
    </ligand>
</feature>
<feature type="binding site" evidence="1">
    <location>
        <position position="161"/>
    </location>
    <ligand>
        <name>[4Fe-4S] cluster</name>
        <dbReference type="ChEBI" id="CHEBI:49883"/>
        <label>1</label>
    </ligand>
</feature>
<feature type="binding site" evidence="1">
    <location>
        <position position="181"/>
    </location>
    <ligand>
        <name>[4Fe-4S] cluster</name>
        <dbReference type="ChEBI" id="CHEBI:49883"/>
        <label>2</label>
        <note>4Fe-4S-S-AdoMet</note>
    </ligand>
</feature>
<feature type="binding site" evidence="1">
    <location>
        <position position="185"/>
    </location>
    <ligand>
        <name>[4Fe-4S] cluster</name>
        <dbReference type="ChEBI" id="CHEBI:49883"/>
        <label>2</label>
        <note>4Fe-4S-S-AdoMet</note>
    </ligand>
</feature>
<feature type="binding site" evidence="1">
    <location>
        <position position="188"/>
    </location>
    <ligand>
        <name>[4Fe-4S] cluster</name>
        <dbReference type="ChEBI" id="CHEBI:49883"/>
        <label>2</label>
        <note>4Fe-4S-S-AdoMet</note>
    </ligand>
</feature>
<feature type="binding site" evidence="1">
    <location>
        <position position="396"/>
    </location>
    <ligand>
        <name>[4Fe-4S] cluster</name>
        <dbReference type="ChEBI" id="CHEBI:49883"/>
        <label>1</label>
    </ligand>
</feature>
<proteinExistence type="inferred from homology"/>
<reference key="1">
    <citation type="journal article" date="2011" name="PLoS Genet.">
        <title>Comparative genomic analysis of human fungal pathogens causing paracoccidioidomycosis.</title>
        <authorList>
            <person name="Desjardins C.A."/>
            <person name="Champion M.D."/>
            <person name="Holder J.W."/>
            <person name="Muszewska A."/>
            <person name="Goldberg J."/>
            <person name="Bailao A.M."/>
            <person name="Brigido M.M."/>
            <person name="Ferreira M.E."/>
            <person name="Garcia A.M."/>
            <person name="Grynberg M."/>
            <person name="Gujja S."/>
            <person name="Heiman D.I."/>
            <person name="Henn M.R."/>
            <person name="Kodira C.D."/>
            <person name="Leon-Narvaez H."/>
            <person name="Longo L.V.G."/>
            <person name="Ma L.-J."/>
            <person name="Malavazi I."/>
            <person name="Matsuo A.L."/>
            <person name="Morais F.V."/>
            <person name="Pereira M."/>
            <person name="Rodriguez-Brito S."/>
            <person name="Sakthikumar S."/>
            <person name="Salem-Izacc S.M."/>
            <person name="Sykes S.M."/>
            <person name="Teixeira M.M."/>
            <person name="Vallejo M.C."/>
            <person name="Walter M.E."/>
            <person name="Yandava C."/>
            <person name="Young S."/>
            <person name="Zeng Q."/>
            <person name="Zucker J."/>
            <person name="Felipe M.S."/>
            <person name="Goldman G.H."/>
            <person name="Haas B.J."/>
            <person name="McEwen J.G."/>
            <person name="Nino-Vega G."/>
            <person name="Puccia R."/>
            <person name="San-Blas G."/>
            <person name="Soares C.M."/>
            <person name="Birren B.W."/>
            <person name="Cuomo C.A."/>
        </authorList>
    </citation>
    <scope>NUCLEOTIDE SEQUENCE [LARGE SCALE GENOMIC DNA]</scope>
    <source>
        <strain>ATCC MYA-826 / Pb01</strain>
    </source>
</reference>